<accession>Q8IZP7</accession>
<accession>Q5W0L0</accession>
<accession>Q68CW6</accession>
<protein>
    <recommendedName>
        <fullName>Heparan-sulfate 6-O-sulfotransferase 3</fullName>
        <shortName>HS6ST-3</shortName>
        <ecNumber>2.8.2.-</ecNumber>
    </recommendedName>
</protein>
<keyword id="KW-0325">Glycoprotein</keyword>
<keyword id="KW-0472">Membrane</keyword>
<keyword id="KW-1267">Proteomics identification</keyword>
<keyword id="KW-1185">Reference proteome</keyword>
<keyword id="KW-0735">Signal-anchor</keyword>
<keyword id="KW-0808">Transferase</keyword>
<keyword id="KW-0812">Transmembrane</keyword>
<keyword id="KW-1133">Transmembrane helix</keyword>
<sequence>MDERFNKWLLTPVLTLLFVVIMYQYVSPSCTSSCTNFGEQPRAGEAGPPAVPGPARRAQAPPEEWERRPQLPPPPRGPPEGPRGAAAPEEEDEEPGDPREGEEEEEEDEPDPEAPENGSLPRFVPRFNFSLKDLTRFVDFNIKGRDVIVFLHIQKTGGTTFGRHLVKNIRLEQPCSCKAGQKKCTCHRPGKKETWLFSRFSTGWSCGLHADWTELTNCVPAIMEKKDCPRNHSHTRNFYYITMLRDPVSRYLSEWKHVQRGATWKTSLHMCDGRSPTPDELPTCYPGDDWSGVSLREFMDCTYNLANNRQVRMLADLSLVGCYNLTFMNESERNTILLQSAKNNLKNMAFFGLTEFQRKTQFLFERTFNLKFISPFTQFNITRASNVEINEGARQRIEDLNFLDMQLYEYAKDLFQQRYHHTKQLEHQRDRQKRREERRLQREHRDHQWPKEDGAAEGTVTEDYNSQVVRW</sequence>
<comment type="function">
    <text>6-O-sulfation enzyme which catalyzes the transfer of sulfate from 3'-phosphoadenosine 5'-phosphosulfate (PAPS) to position 6 of the N-sulfoglucosamine residue (GlcNS) of heparan sulfate.</text>
</comment>
<comment type="catalytic activity">
    <reaction>
        <text>alpha-D-glucosaminyl-[heparan sulfate](n) + 3'-phosphoadenylyl sulfate = 6-sulfo-alpha-D-glucosaminyl-[heparan sulfate](n) + adenosine 3',5'-bisphosphate + H(+)</text>
        <dbReference type="Rhea" id="RHEA:56604"/>
        <dbReference type="Rhea" id="RHEA-COMP:9830"/>
        <dbReference type="Rhea" id="RHEA-COMP:14621"/>
        <dbReference type="ChEBI" id="CHEBI:15378"/>
        <dbReference type="ChEBI" id="CHEBI:58339"/>
        <dbReference type="ChEBI" id="CHEBI:58343"/>
        <dbReference type="ChEBI" id="CHEBI:58388"/>
        <dbReference type="ChEBI" id="CHEBI:140604"/>
    </reaction>
</comment>
<comment type="subcellular location">
    <subcellularLocation>
        <location evidence="4">Membrane</location>
        <topology evidence="4">Single-pass type II membrane protein</topology>
    </subcellularLocation>
</comment>
<comment type="similarity">
    <text evidence="4">Belongs to the sulfotransferase 6 family.</text>
</comment>
<evidence type="ECO:0000250" key="1">
    <source>
        <dbReference type="UniProtKB" id="A0MGZ7"/>
    </source>
</evidence>
<evidence type="ECO:0000255" key="2"/>
<evidence type="ECO:0000256" key="3">
    <source>
        <dbReference type="SAM" id="MobiDB-lite"/>
    </source>
</evidence>
<evidence type="ECO:0000305" key="4"/>
<name>H6ST3_HUMAN</name>
<proteinExistence type="evidence at protein level"/>
<dbReference type="EC" id="2.8.2.-"/>
<dbReference type="EMBL" id="AF539426">
    <property type="protein sequence ID" value="AAN33062.1"/>
    <property type="molecule type" value="mRNA"/>
</dbReference>
<dbReference type="EMBL" id="AL138816">
    <property type="status" value="NOT_ANNOTATED_CDS"/>
    <property type="molecule type" value="Genomic_DNA"/>
</dbReference>
<dbReference type="EMBL" id="AL158192">
    <property type="status" value="NOT_ANNOTATED_CDS"/>
    <property type="molecule type" value="Genomic_DNA"/>
</dbReference>
<dbReference type="EMBL" id="CR749677">
    <property type="protein sequence ID" value="CAH18468.1"/>
    <property type="molecule type" value="mRNA"/>
</dbReference>
<dbReference type="CCDS" id="CCDS9481.1"/>
<dbReference type="RefSeq" id="NP_703157.2">
    <property type="nucleotide sequence ID" value="NM_153456.3"/>
</dbReference>
<dbReference type="SMR" id="Q8IZP7"/>
<dbReference type="BioGRID" id="129329">
    <property type="interactions" value="28"/>
</dbReference>
<dbReference type="FunCoup" id="Q8IZP7">
    <property type="interactions" value="135"/>
</dbReference>
<dbReference type="IntAct" id="Q8IZP7">
    <property type="interactions" value="6"/>
</dbReference>
<dbReference type="STRING" id="9606.ENSP00000365895"/>
<dbReference type="GlyCosmos" id="Q8IZP7">
    <property type="glycosylation" value="6 sites, No reported glycans"/>
</dbReference>
<dbReference type="GlyGen" id="Q8IZP7">
    <property type="glycosylation" value="8 sites, 1 O-linked glycan (1 site)"/>
</dbReference>
<dbReference type="iPTMnet" id="Q8IZP7"/>
<dbReference type="PhosphoSitePlus" id="Q8IZP7"/>
<dbReference type="BioMuta" id="HS6ST3"/>
<dbReference type="DMDM" id="116242508"/>
<dbReference type="jPOST" id="Q8IZP7"/>
<dbReference type="MassIVE" id="Q8IZP7"/>
<dbReference type="PaxDb" id="9606-ENSP00000365895"/>
<dbReference type="PeptideAtlas" id="Q8IZP7"/>
<dbReference type="ProteomicsDB" id="71394"/>
<dbReference type="Antibodypedia" id="24893">
    <property type="antibodies" value="45 antibodies from 18 providers"/>
</dbReference>
<dbReference type="DNASU" id="266722"/>
<dbReference type="Ensembl" id="ENST00000376705.4">
    <property type="protein sequence ID" value="ENSP00000365895.2"/>
    <property type="gene ID" value="ENSG00000185352.10"/>
</dbReference>
<dbReference type="GeneID" id="266722"/>
<dbReference type="KEGG" id="hsa:266722"/>
<dbReference type="MANE-Select" id="ENST00000376705.4">
    <property type="protein sequence ID" value="ENSP00000365895.2"/>
    <property type="RefSeq nucleotide sequence ID" value="NM_153456.4"/>
    <property type="RefSeq protein sequence ID" value="NP_703157.2"/>
</dbReference>
<dbReference type="UCSC" id="uc001vmw.4">
    <property type="organism name" value="human"/>
</dbReference>
<dbReference type="AGR" id="HGNC:19134"/>
<dbReference type="CTD" id="266722"/>
<dbReference type="DisGeNET" id="266722"/>
<dbReference type="GeneCards" id="HS6ST3"/>
<dbReference type="HGNC" id="HGNC:19134">
    <property type="gene designation" value="HS6ST3"/>
</dbReference>
<dbReference type="HPA" id="ENSG00000185352">
    <property type="expression patterns" value="Tissue enriched (brain)"/>
</dbReference>
<dbReference type="MIM" id="609401">
    <property type="type" value="gene"/>
</dbReference>
<dbReference type="neXtProt" id="NX_Q8IZP7"/>
<dbReference type="OpenTargets" id="ENSG00000185352"/>
<dbReference type="PharmGKB" id="PA134879312"/>
<dbReference type="VEuPathDB" id="HostDB:ENSG00000185352"/>
<dbReference type="eggNOG" id="KOG3955">
    <property type="taxonomic scope" value="Eukaryota"/>
</dbReference>
<dbReference type="GeneTree" id="ENSGT00950000183071"/>
<dbReference type="HOGENOM" id="CLU_027877_1_0_1"/>
<dbReference type="InParanoid" id="Q8IZP7"/>
<dbReference type="OMA" id="RKTQYMF"/>
<dbReference type="OrthoDB" id="406981at2759"/>
<dbReference type="PAN-GO" id="Q8IZP7">
    <property type="GO annotations" value="2 GO annotations based on evolutionary models"/>
</dbReference>
<dbReference type="PhylomeDB" id="Q8IZP7"/>
<dbReference type="TreeFam" id="TF312835"/>
<dbReference type="BioCyc" id="MetaCyc:MONOMER-15787"/>
<dbReference type="PathwayCommons" id="Q8IZP7"/>
<dbReference type="Reactome" id="R-HSA-2022928">
    <property type="pathway name" value="HS-GAG biosynthesis"/>
</dbReference>
<dbReference type="SignaLink" id="Q8IZP7"/>
<dbReference type="BioGRID-ORCS" id="266722">
    <property type="hits" value="16 hits in 1143 CRISPR screens"/>
</dbReference>
<dbReference type="ChiTaRS" id="HS6ST3">
    <property type="organism name" value="human"/>
</dbReference>
<dbReference type="GenomeRNAi" id="266722"/>
<dbReference type="Pharos" id="Q8IZP7">
    <property type="development level" value="Tdark"/>
</dbReference>
<dbReference type="PRO" id="PR:Q8IZP7"/>
<dbReference type="Proteomes" id="UP000005640">
    <property type="component" value="Chromosome 13"/>
</dbReference>
<dbReference type="RNAct" id="Q8IZP7">
    <property type="molecule type" value="protein"/>
</dbReference>
<dbReference type="Bgee" id="ENSG00000185352">
    <property type="expression patterns" value="Expressed in lateral nuclear group of thalamus and 146 other cell types or tissues"/>
</dbReference>
<dbReference type="ExpressionAtlas" id="Q8IZP7">
    <property type="expression patterns" value="baseline and differential"/>
</dbReference>
<dbReference type="GO" id="GO:0005794">
    <property type="term" value="C:Golgi apparatus"/>
    <property type="evidence" value="ECO:0007669"/>
    <property type="project" value="Ensembl"/>
</dbReference>
<dbReference type="GO" id="GO:0016020">
    <property type="term" value="C:membrane"/>
    <property type="evidence" value="ECO:0007669"/>
    <property type="project" value="UniProtKB-SubCell"/>
</dbReference>
<dbReference type="GO" id="GO:0017095">
    <property type="term" value="F:heparan sulfate 6-sulfotransferase activity"/>
    <property type="evidence" value="ECO:0000318"/>
    <property type="project" value="GO_Central"/>
</dbReference>
<dbReference type="GO" id="GO:0015012">
    <property type="term" value="P:heparan sulfate proteoglycan biosynthetic process"/>
    <property type="evidence" value="ECO:0007669"/>
    <property type="project" value="Ensembl"/>
</dbReference>
<dbReference type="FunFam" id="3.40.50.300:FF:000852">
    <property type="entry name" value="Heparan-sulfate 6-O-sulfotransferase"/>
    <property type="match status" value="1"/>
</dbReference>
<dbReference type="FunFam" id="3.40.50.300:FF:001933">
    <property type="entry name" value="Heparan-sulfate 6-O-sulfotransferase"/>
    <property type="match status" value="1"/>
</dbReference>
<dbReference type="Gene3D" id="3.40.50.300">
    <property type="entry name" value="P-loop containing nucleotide triphosphate hydrolases"/>
    <property type="match status" value="1"/>
</dbReference>
<dbReference type="InterPro" id="IPR010635">
    <property type="entry name" value="Heparan_SO4-6-sulfoTrfase"/>
</dbReference>
<dbReference type="InterPro" id="IPR027417">
    <property type="entry name" value="P-loop_NTPase"/>
</dbReference>
<dbReference type="InterPro" id="IPR005331">
    <property type="entry name" value="Sulfotransferase"/>
</dbReference>
<dbReference type="PANTHER" id="PTHR12812">
    <property type="entry name" value="HEPARAN SULFATE 6-O-SULFOTRANSFERASE 3"/>
    <property type="match status" value="1"/>
</dbReference>
<dbReference type="PANTHER" id="PTHR12812:SF3">
    <property type="entry name" value="HEPARAN-SULFATE 6-O-SULFOTRANSFERASE 3"/>
    <property type="match status" value="1"/>
</dbReference>
<dbReference type="Pfam" id="PF03567">
    <property type="entry name" value="Sulfotransfer_2"/>
    <property type="match status" value="1"/>
</dbReference>
<dbReference type="SUPFAM" id="SSF52540">
    <property type="entry name" value="P-loop containing nucleoside triphosphate hydrolases"/>
    <property type="match status" value="1"/>
</dbReference>
<reference key="1">
    <citation type="submission" date="2002-08" db="EMBL/GenBank/DDBJ databases">
        <title>The coding sequence of HS6ST3 spans an intron of 741 kb.</title>
        <authorList>
            <person name="Bonner T.I."/>
            <person name="Ferraren D.O."/>
            <person name="Detera-Wadleigh S."/>
        </authorList>
    </citation>
    <scope>NUCLEOTIDE SEQUENCE [MRNA]</scope>
    <source>
        <tissue>Brain</tissue>
    </source>
</reference>
<reference key="2">
    <citation type="journal article" date="2004" name="Nature">
        <title>The DNA sequence and analysis of human chromosome 13.</title>
        <authorList>
            <person name="Dunham A."/>
            <person name="Matthews L.H."/>
            <person name="Burton J."/>
            <person name="Ashurst J.L."/>
            <person name="Howe K.L."/>
            <person name="Ashcroft K.J."/>
            <person name="Beare D.M."/>
            <person name="Burford D.C."/>
            <person name="Hunt S.E."/>
            <person name="Griffiths-Jones S."/>
            <person name="Jones M.C."/>
            <person name="Keenan S.J."/>
            <person name="Oliver K."/>
            <person name="Scott C.E."/>
            <person name="Ainscough R."/>
            <person name="Almeida J.P."/>
            <person name="Ambrose K.D."/>
            <person name="Andrews D.T."/>
            <person name="Ashwell R.I.S."/>
            <person name="Babbage A.K."/>
            <person name="Bagguley C.L."/>
            <person name="Bailey J."/>
            <person name="Bannerjee R."/>
            <person name="Barlow K.F."/>
            <person name="Bates K."/>
            <person name="Beasley H."/>
            <person name="Bird C.P."/>
            <person name="Bray-Allen S."/>
            <person name="Brown A.J."/>
            <person name="Brown J.Y."/>
            <person name="Burrill W."/>
            <person name="Carder C."/>
            <person name="Carter N.P."/>
            <person name="Chapman J.C."/>
            <person name="Clamp M.E."/>
            <person name="Clark S.Y."/>
            <person name="Clarke G."/>
            <person name="Clee C.M."/>
            <person name="Clegg S.C."/>
            <person name="Cobley V."/>
            <person name="Collins J.E."/>
            <person name="Corby N."/>
            <person name="Coville G.J."/>
            <person name="Deloukas P."/>
            <person name="Dhami P."/>
            <person name="Dunham I."/>
            <person name="Dunn M."/>
            <person name="Earthrowl M.E."/>
            <person name="Ellington A.G."/>
            <person name="Faulkner L."/>
            <person name="Frankish A.G."/>
            <person name="Frankland J."/>
            <person name="French L."/>
            <person name="Garner P."/>
            <person name="Garnett J."/>
            <person name="Gilbert J.G.R."/>
            <person name="Gilson C.J."/>
            <person name="Ghori J."/>
            <person name="Grafham D.V."/>
            <person name="Gribble S.M."/>
            <person name="Griffiths C."/>
            <person name="Hall R.E."/>
            <person name="Hammond S."/>
            <person name="Harley J.L."/>
            <person name="Hart E.A."/>
            <person name="Heath P.D."/>
            <person name="Howden P.J."/>
            <person name="Huckle E.J."/>
            <person name="Hunt P.J."/>
            <person name="Hunt A.R."/>
            <person name="Johnson C."/>
            <person name="Johnson D."/>
            <person name="Kay M."/>
            <person name="Kimberley A.M."/>
            <person name="King A."/>
            <person name="Laird G.K."/>
            <person name="Langford C.J."/>
            <person name="Lawlor S."/>
            <person name="Leongamornlert D.A."/>
            <person name="Lloyd D.M."/>
            <person name="Lloyd C."/>
            <person name="Loveland J.E."/>
            <person name="Lovell J."/>
            <person name="Martin S."/>
            <person name="Mashreghi-Mohammadi M."/>
            <person name="McLaren S.J."/>
            <person name="McMurray A."/>
            <person name="Milne S."/>
            <person name="Moore M.J.F."/>
            <person name="Nickerson T."/>
            <person name="Palmer S.A."/>
            <person name="Pearce A.V."/>
            <person name="Peck A.I."/>
            <person name="Pelan S."/>
            <person name="Phillimore B."/>
            <person name="Porter K.M."/>
            <person name="Rice C.M."/>
            <person name="Searle S."/>
            <person name="Sehra H.K."/>
            <person name="Shownkeen R."/>
            <person name="Skuce C.D."/>
            <person name="Smith M."/>
            <person name="Steward C.A."/>
            <person name="Sycamore N."/>
            <person name="Tester J."/>
            <person name="Thomas D.W."/>
            <person name="Tracey A."/>
            <person name="Tromans A."/>
            <person name="Tubby B."/>
            <person name="Wall M."/>
            <person name="Wallis J.M."/>
            <person name="West A.P."/>
            <person name="Whitehead S.L."/>
            <person name="Willey D.L."/>
            <person name="Wilming L."/>
            <person name="Wray P.W."/>
            <person name="Wright M.W."/>
            <person name="Young L."/>
            <person name="Coulson A."/>
            <person name="Durbin R.M."/>
            <person name="Hubbard T."/>
            <person name="Sulston J.E."/>
            <person name="Beck S."/>
            <person name="Bentley D.R."/>
            <person name="Rogers J."/>
            <person name="Ross M.T."/>
        </authorList>
    </citation>
    <scope>NUCLEOTIDE SEQUENCE [LARGE SCALE GENOMIC DNA]</scope>
</reference>
<reference key="3">
    <citation type="journal article" date="2007" name="BMC Genomics">
        <title>The full-ORF clone resource of the German cDNA consortium.</title>
        <authorList>
            <person name="Bechtel S."/>
            <person name="Rosenfelder H."/>
            <person name="Duda A."/>
            <person name="Schmidt C.P."/>
            <person name="Ernst U."/>
            <person name="Wellenreuther R."/>
            <person name="Mehrle A."/>
            <person name="Schuster C."/>
            <person name="Bahr A."/>
            <person name="Bloecker H."/>
            <person name="Heubner D."/>
            <person name="Hoerlein A."/>
            <person name="Michel G."/>
            <person name="Wedler H."/>
            <person name="Koehrer K."/>
            <person name="Ottenwaelder B."/>
            <person name="Poustka A."/>
            <person name="Wiemann S."/>
            <person name="Schupp I."/>
        </authorList>
    </citation>
    <scope>NUCLEOTIDE SEQUENCE [LARGE SCALE MRNA] OF 105-471</scope>
    <source>
        <tissue>Amygdala</tissue>
    </source>
</reference>
<gene>
    <name type="primary">HS6ST3</name>
</gene>
<feature type="chain" id="PRO_0000190809" description="Heparan-sulfate 6-O-sulfotransferase 3">
    <location>
        <begin position="1"/>
        <end position="471"/>
    </location>
</feature>
<feature type="topological domain" description="Cytoplasmic" evidence="2">
    <location>
        <begin position="1"/>
        <end position="4"/>
    </location>
</feature>
<feature type="transmembrane region" description="Helical; Signal-anchor for type II membrane protein" evidence="2">
    <location>
        <begin position="5"/>
        <end position="27"/>
    </location>
</feature>
<feature type="topological domain" description="Lumenal" evidence="2">
    <location>
        <begin position="28"/>
        <end position="471"/>
    </location>
</feature>
<feature type="region of interest" description="Disordered" evidence="3">
    <location>
        <begin position="39"/>
        <end position="122"/>
    </location>
</feature>
<feature type="region of interest" description="Disordered" evidence="3">
    <location>
        <begin position="422"/>
        <end position="471"/>
    </location>
</feature>
<feature type="compositionally biased region" description="Low complexity" evidence="3">
    <location>
        <begin position="41"/>
        <end position="62"/>
    </location>
</feature>
<feature type="compositionally biased region" description="Pro residues" evidence="3">
    <location>
        <begin position="70"/>
        <end position="81"/>
    </location>
</feature>
<feature type="compositionally biased region" description="Acidic residues" evidence="3">
    <location>
        <begin position="88"/>
        <end position="114"/>
    </location>
</feature>
<feature type="compositionally biased region" description="Basic and acidic residues" evidence="3">
    <location>
        <begin position="423"/>
        <end position="454"/>
    </location>
</feature>
<feature type="compositionally biased region" description="Polar residues" evidence="3">
    <location>
        <begin position="462"/>
        <end position="471"/>
    </location>
</feature>
<feature type="active site" description="Proton acceptor" evidence="1">
    <location>
        <position position="209"/>
    </location>
</feature>
<feature type="binding site" evidence="1">
    <location>
        <begin position="152"/>
        <end position="160"/>
    </location>
    <ligand>
        <name>3'-phosphoadenylyl sulfate</name>
        <dbReference type="ChEBI" id="CHEBI:58339"/>
    </ligand>
</feature>
<feature type="binding site" evidence="1">
    <location>
        <begin position="182"/>
        <end position="183"/>
    </location>
    <ligand>
        <name>substrate</name>
    </ligand>
</feature>
<feature type="binding site" evidence="1">
    <location>
        <position position="199"/>
    </location>
    <ligand>
        <name>substrate</name>
    </ligand>
</feature>
<feature type="binding site" evidence="1">
    <location>
        <position position="204"/>
    </location>
    <ligand>
        <name>substrate</name>
    </ligand>
</feature>
<feature type="binding site" evidence="1">
    <location>
        <position position="209"/>
    </location>
    <ligand>
        <name>substrate</name>
    </ligand>
</feature>
<feature type="binding site" evidence="1">
    <location>
        <position position="245"/>
    </location>
    <ligand>
        <name>3'-phosphoadenylyl sulfate</name>
        <dbReference type="ChEBI" id="CHEBI:58339"/>
    </ligand>
</feature>
<feature type="binding site" evidence="1">
    <location>
        <position position="253"/>
    </location>
    <ligand>
        <name>3'-phosphoadenylyl sulfate</name>
        <dbReference type="ChEBI" id="CHEBI:58339"/>
    </ligand>
</feature>
<feature type="binding site" evidence="1">
    <location>
        <position position="257"/>
    </location>
    <ligand>
        <name>substrate</name>
    </ligand>
</feature>
<feature type="binding site" evidence="1">
    <location>
        <position position="264"/>
    </location>
    <ligand>
        <name>substrate</name>
    </ligand>
</feature>
<feature type="binding site" evidence="1">
    <location>
        <begin position="377"/>
        <end position="379"/>
    </location>
    <ligand>
        <name>3'-phosphoadenylyl sulfate</name>
        <dbReference type="ChEBI" id="CHEBI:58339"/>
    </ligand>
</feature>
<feature type="binding site" evidence="1">
    <location>
        <begin position="383"/>
        <end position="384"/>
    </location>
    <ligand>
        <name>3'-phosphoadenylyl sulfate</name>
        <dbReference type="ChEBI" id="CHEBI:58339"/>
    </ligand>
</feature>
<feature type="glycosylation site" description="N-linked (GlcNAc...) asparagine" evidence="2">
    <location>
        <position position="117"/>
    </location>
</feature>
<feature type="glycosylation site" description="N-linked (GlcNAc...) asparagine" evidence="2">
    <location>
        <position position="128"/>
    </location>
</feature>
<feature type="glycosylation site" description="N-linked (GlcNAc...) asparagine" evidence="2">
    <location>
        <position position="231"/>
    </location>
</feature>
<feature type="glycosylation site" description="N-linked (GlcNAc...) asparagine" evidence="2">
    <location>
        <position position="324"/>
    </location>
</feature>
<feature type="glycosylation site" description="N-linked (GlcNAc...) asparagine" evidence="2">
    <location>
        <position position="329"/>
    </location>
</feature>
<feature type="glycosylation site" description="N-linked (GlcNAc...) asparagine" evidence="2">
    <location>
        <position position="380"/>
    </location>
</feature>
<feature type="sequence variant" id="VAR_028159" description="In dbSNP:rs9516771.">
    <original>K</original>
    <variation>R</variation>
    <location>
        <position position="265"/>
    </location>
</feature>
<feature type="sequence conflict" description="In Ref. 1; AAN33062." evidence="4" ref="1">
    <original>F</original>
    <variation>L</variation>
    <location>
        <position position="37"/>
    </location>
</feature>
<organism>
    <name type="scientific">Homo sapiens</name>
    <name type="common">Human</name>
    <dbReference type="NCBI Taxonomy" id="9606"/>
    <lineage>
        <taxon>Eukaryota</taxon>
        <taxon>Metazoa</taxon>
        <taxon>Chordata</taxon>
        <taxon>Craniata</taxon>
        <taxon>Vertebrata</taxon>
        <taxon>Euteleostomi</taxon>
        <taxon>Mammalia</taxon>
        <taxon>Eutheria</taxon>
        <taxon>Euarchontoglires</taxon>
        <taxon>Primates</taxon>
        <taxon>Haplorrhini</taxon>
        <taxon>Catarrhini</taxon>
        <taxon>Hominidae</taxon>
        <taxon>Homo</taxon>
    </lineage>
</organism>